<protein>
    <recommendedName>
        <fullName>Maturase K</fullName>
    </recommendedName>
    <alternativeName>
        <fullName>Intron maturase</fullName>
    </alternativeName>
</protein>
<proteinExistence type="inferred from homology"/>
<accession>O98840</accession>
<gene>
    <name type="primary">matK</name>
</gene>
<dbReference type="EMBL" id="U96882">
    <property type="protein sequence ID" value="AAC98837.1"/>
    <property type="molecule type" value="Genomic_DNA"/>
</dbReference>
<dbReference type="GO" id="GO:0009507">
    <property type="term" value="C:chloroplast"/>
    <property type="evidence" value="ECO:0007669"/>
    <property type="project" value="UniProtKB-SubCell"/>
</dbReference>
<dbReference type="GO" id="GO:0003723">
    <property type="term" value="F:RNA binding"/>
    <property type="evidence" value="ECO:0007669"/>
    <property type="project" value="UniProtKB-KW"/>
</dbReference>
<dbReference type="GO" id="GO:0006397">
    <property type="term" value="P:mRNA processing"/>
    <property type="evidence" value="ECO:0007669"/>
    <property type="project" value="UniProtKB-KW"/>
</dbReference>
<dbReference type="GO" id="GO:0008033">
    <property type="term" value="P:tRNA processing"/>
    <property type="evidence" value="ECO:0007669"/>
    <property type="project" value="UniProtKB-KW"/>
</dbReference>
<dbReference type="InterPro" id="IPR002866">
    <property type="entry name" value="Maturase_MatK"/>
</dbReference>
<dbReference type="InterPro" id="IPR024942">
    <property type="entry name" value="Maturase_MatK_N"/>
</dbReference>
<dbReference type="PANTHER" id="PTHR34811">
    <property type="entry name" value="MATURASE K"/>
    <property type="match status" value="1"/>
</dbReference>
<dbReference type="PANTHER" id="PTHR34811:SF1">
    <property type="entry name" value="MATURASE K"/>
    <property type="match status" value="1"/>
</dbReference>
<dbReference type="Pfam" id="PF01824">
    <property type="entry name" value="MatK_N"/>
    <property type="match status" value="1"/>
</dbReference>
<organism>
    <name type="scientific">Hydrangea quercifolia</name>
    <name type="common">Oakleaf hydrangea</name>
    <dbReference type="NCBI Taxonomy" id="60124"/>
    <lineage>
        <taxon>Eukaryota</taxon>
        <taxon>Viridiplantae</taxon>
        <taxon>Streptophyta</taxon>
        <taxon>Embryophyta</taxon>
        <taxon>Tracheophyta</taxon>
        <taxon>Spermatophyta</taxon>
        <taxon>Magnoliopsida</taxon>
        <taxon>eudicotyledons</taxon>
        <taxon>Gunneridae</taxon>
        <taxon>Pentapetalae</taxon>
        <taxon>asterids</taxon>
        <taxon>Cornales</taxon>
        <taxon>Hydrangeaceae</taxon>
        <taxon>Hydrangeeae</taxon>
        <taxon>Hydrangea</taxon>
        <taxon>Hydrangea incertae sedis</taxon>
    </lineage>
</organism>
<geneLocation type="chloroplast"/>
<feature type="chain" id="PRO_0000143430" description="Maturase K">
    <location>
        <begin position="1"/>
        <end position="354" status="greater than"/>
    </location>
</feature>
<feature type="non-terminal residue">
    <location>
        <position position="354"/>
    </location>
</feature>
<sequence length="354" mass="42377">MEEFKRYFELDRYQQHDFLYPLIFQEYIYALAHDHGLNRSIFLENAGYDNKSSLLIVKRLITRMYQQNHFLISVNDSNQNQFLGHNKNFSYQMISEGFSVIVEIPFSLRLISSLEGKXIVXYPNLRSIHSIFPFLEDKFLHLNYVLDILIPYPIHLEILVQTLRHWVKDASSLHLLRFFLHEYRNWNSLITPKKXSFSCSKRNERLSLFLYNSHVXEYESIFVFLRNQSSHXRSTSSGALLERIHFYGKIELRVGVFAKDFQSXLWLFKDPFIHYVRXQGKSILASKGTXLLMNKWKYYLVNCWXCHFYVWSQPRNIYRNQLSNYSLDFLGYLSSXRLNTSMERSQMLENSYLI</sequence>
<name>MATK_HYDQU</name>
<keyword id="KW-0150">Chloroplast</keyword>
<keyword id="KW-0507">mRNA processing</keyword>
<keyword id="KW-0934">Plastid</keyword>
<keyword id="KW-0694">RNA-binding</keyword>
<keyword id="KW-0819">tRNA processing</keyword>
<comment type="function">
    <text evidence="1">Usually encoded in the trnK tRNA gene intron. Probably assists in splicing its own and other chloroplast group II introns (By similarity).</text>
</comment>
<comment type="subcellular location">
    <subcellularLocation>
        <location>Plastid</location>
        <location>Chloroplast</location>
    </subcellularLocation>
</comment>
<comment type="similarity">
    <text evidence="2">Belongs to the intron maturase 2 family. MatK subfamily.</text>
</comment>
<reference key="1">
    <citation type="journal article" date="1998" name="Am. J. Bot.">
        <title>Phylogenetic relationships of Cornaceae and close relatives inferred from matK and rbcL sequences.</title>
        <authorList>
            <person name="Xiang Q.-Y."/>
            <person name="Soltis D.E."/>
            <person name="Soltis P.S."/>
        </authorList>
    </citation>
    <scope>NUCLEOTIDE SEQUENCE [GENOMIC DNA]</scope>
</reference>
<evidence type="ECO:0000250" key="1"/>
<evidence type="ECO:0000305" key="2"/>